<dbReference type="iPTMnet" id="P80350"/>
<dbReference type="GO" id="GO:0005737">
    <property type="term" value="C:cytoplasm"/>
    <property type="evidence" value="ECO:0007669"/>
    <property type="project" value="UniProtKB-SubCell"/>
</dbReference>
<dbReference type="GO" id="GO:0005634">
    <property type="term" value="C:nucleus"/>
    <property type="evidence" value="ECO:0007669"/>
    <property type="project" value="UniProtKB-SubCell"/>
</dbReference>
<dbReference type="GO" id="GO:1990904">
    <property type="term" value="C:ribonucleoprotein complex"/>
    <property type="evidence" value="ECO:0007669"/>
    <property type="project" value="UniProtKB-KW"/>
</dbReference>
<dbReference type="GO" id="GO:0003723">
    <property type="term" value="F:RNA binding"/>
    <property type="evidence" value="ECO:0007669"/>
    <property type="project" value="UniProtKB-KW"/>
</dbReference>
<dbReference type="Gene3D" id="3.30.70.330">
    <property type="match status" value="1"/>
</dbReference>
<dbReference type="InterPro" id="IPR012677">
    <property type="entry name" value="Nucleotide-bd_a/b_plait_sf"/>
</dbReference>
<dbReference type="InterPro" id="IPR035979">
    <property type="entry name" value="RBD_domain_sf"/>
</dbReference>
<dbReference type="PRINTS" id="PR01228">
    <property type="entry name" value="EGGSHELL"/>
</dbReference>
<dbReference type="SUPFAM" id="SSF54928">
    <property type="entry name" value="RNA-binding domain, RBD"/>
    <property type="match status" value="1"/>
</dbReference>
<keyword id="KW-0963">Cytoplasm</keyword>
<keyword id="KW-0903">Direct protein sequencing</keyword>
<keyword id="KW-0488">Methylation</keyword>
<keyword id="KW-0539">Nucleus</keyword>
<keyword id="KW-0597">Phosphoprotein</keyword>
<keyword id="KW-0687">Ribonucleoprotein</keyword>
<keyword id="KW-0694">RNA-binding</keyword>
<name>ROAB_ARTSA</name>
<comment type="function">
    <text>May regulate mRNA translation and stability. It binds to poly(A) and poly(U) regions of RNA. This binding is inhibited when the protein is phosphorylated.</text>
</comment>
<comment type="subcellular location">
    <subcellularLocation>
        <location>Cytoplasm</location>
    </subcellularLocation>
    <subcellularLocation>
        <location>Nucleus</location>
    </subcellularLocation>
    <text>At the onset of the cryptoblastic phase, when transcription is blocked, it accumulates in the cytoplasm.</text>
</comment>
<comment type="PTM">
    <text>Extensively phosphorylated on tyrosine residues.</text>
</comment>
<proteinExistence type="evidence at protein level"/>
<protein>
    <recommendedName>
        <fullName>Heterogeneous nuclear ribonucleoprotein A/B</fullName>
    </recommendedName>
    <alternativeName>
        <fullName>P38</fullName>
    </alternativeName>
</protein>
<organism>
    <name type="scientific">Artemia salina</name>
    <name type="common">Brine shrimp</name>
    <dbReference type="NCBI Taxonomy" id="85549"/>
    <lineage>
        <taxon>Eukaryota</taxon>
        <taxon>Metazoa</taxon>
        <taxon>Ecdysozoa</taxon>
        <taxon>Arthropoda</taxon>
        <taxon>Crustacea</taxon>
        <taxon>Branchiopoda</taxon>
        <taxon>Anostraca</taxon>
        <taxon>Artemiidae</taxon>
        <taxon>Artemia</taxon>
    </lineage>
</organism>
<feature type="chain" id="PRO_0000081842" description="Heterogeneous nuclear ribonucleoprotein A/B">
    <location>
        <begin position="1" status="less than"/>
        <end position="195" status="greater than"/>
    </location>
</feature>
<feature type="domain" description="RRM" evidence="1">
    <location>
        <begin position="32"/>
        <end position="48" status="greater than"/>
    </location>
</feature>
<feature type="region of interest" description="Disordered" evidence="2">
    <location>
        <begin position="1"/>
        <end position="23"/>
    </location>
</feature>
<feature type="compositionally biased region" description="Basic and acidic residues" evidence="2">
    <location>
        <begin position="12"/>
        <end position="23"/>
    </location>
</feature>
<feature type="modified residue" description="Asymmetric dimethylarginine" evidence="3">
    <location>
        <position position="119"/>
    </location>
</feature>
<feature type="modified residue" description="Asymmetric dimethylarginine" evidence="3">
    <location>
        <position position="122"/>
    </location>
</feature>
<feature type="modified residue" description="Phosphoserine; by CK2" evidence="3">
    <location>
        <position position="173"/>
    </location>
</feature>
<feature type="non-consecutive residues" evidence="4">
    <location>
        <begin position="15"/>
        <end position="16"/>
    </location>
</feature>
<feature type="non-consecutive residues" evidence="4">
    <location>
        <begin position="48"/>
        <end position="49"/>
    </location>
</feature>
<feature type="non-consecutive residues" evidence="4">
    <location>
        <begin position="58"/>
        <end position="59"/>
    </location>
</feature>
<feature type="non-consecutive residues" evidence="4">
    <location>
        <begin position="73"/>
        <end position="74"/>
    </location>
</feature>
<feature type="non-consecutive residues" evidence="4">
    <location>
        <begin position="83"/>
        <end position="84"/>
    </location>
</feature>
<feature type="non-consecutive residues" evidence="4">
    <location>
        <begin position="96"/>
        <end position="97"/>
    </location>
</feature>
<feature type="non-consecutive residues" evidence="4">
    <location>
        <begin position="125"/>
        <end position="126"/>
    </location>
</feature>
<feature type="non-terminal residue">
    <location>
        <position position="1"/>
    </location>
</feature>
<feature type="non-terminal residue">
    <location>
        <position position="195"/>
    </location>
</feature>
<sequence length="195" mass="20614">EEVADGQAHGEXVYREEHHEGEKNXHLVXKDEETKLFVGALSWETTEKYGEIEGINVKPNLNRXRXFAXINIKTPNALDDAIKYGTITXAAVVLDKXKXYEVDIKKATPKDAMMMPPMRGGRGGLGLGGAWVAPGSFGYGGGYGGYGGGYGDDAYGGAGYDYYGSGYGGGYGSGYEGYGYNGGYGGYSGPARGGK</sequence>
<reference key="1">
    <citation type="journal article" date="1994" name="J. Biol. Chem.">
        <title>Tyrosine phosphorylation of a M(r) 38,000 A/B-type hnRNP protein selectively modulates its RNA binding.</title>
        <authorList>
            <person name="Pype S."/>
            <person name="Slegers H."/>
            <person name="Moens L."/>
            <person name="Merlevede W."/>
            <person name="Goris J."/>
        </authorList>
    </citation>
    <scope>PROTEIN SEQUENCE</scope>
    <scope>PHOSPHORYLATION AT SER-173</scope>
    <scope>METHYLATION AT ARG-119 AND ARG-122</scope>
</reference>
<accession>P80350</accession>
<evidence type="ECO:0000255" key="1">
    <source>
        <dbReference type="PROSITE-ProRule" id="PRU00176"/>
    </source>
</evidence>
<evidence type="ECO:0000256" key="2">
    <source>
        <dbReference type="SAM" id="MobiDB-lite"/>
    </source>
</evidence>
<evidence type="ECO:0000269" key="3">
    <source>
    </source>
</evidence>
<evidence type="ECO:0000305" key="4"/>